<comment type="function">
    <text evidence="1">Phosphorylation of dTMP to form dTDP in both de novo and salvage pathways of dTTP synthesis.</text>
</comment>
<comment type="catalytic activity">
    <reaction evidence="1">
        <text>dTMP + ATP = dTDP + ADP</text>
        <dbReference type="Rhea" id="RHEA:13517"/>
        <dbReference type="ChEBI" id="CHEBI:30616"/>
        <dbReference type="ChEBI" id="CHEBI:58369"/>
        <dbReference type="ChEBI" id="CHEBI:63528"/>
        <dbReference type="ChEBI" id="CHEBI:456216"/>
        <dbReference type="EC" id="2.7.4.9"/>
    </reaction>
</comment>
<comment type="similarity">
    <text evidence="1">Belongs to the thymidylate kinase family.</text>
</comment>
<gene>
    <name evidence="1" type="primary">tmk</name>
    <name type="ordered locus">IL1336</name>
</gene>
<organism>
    <name type="scientific">Idiomarina loihiensis (strain ATCC BAA-735 / DSM 15497 / L2-TR)</name>
    <dbReference type="NCBI Taxonomy" id="283942"/>
    <lineage>
        <taxon>Bacteria</taxon>
        <taxon>Pseudomonadati</taxon>
        <taxon>Pseudomonadota</taxon>
        <taxon>Gammaproteobacteria</taxon>
        <taxon>Alteromonadales</taxon>
        <taxon>Idiomarinaceae</taxon>
        <taxon>Idiomarina</taxon>
    </lineage>
</organism>
<evidence type="ECO:0000255" key="1">
    <source>
        <dbReference type="HAMAP-Rule" id="MF_00165"/>
    </source>
</evidence>
<dbReference type="EC" id="2.7.4.9" evidence="1"/>
<dbReference type="EMBL" id="AE017340">
    <property type="protein sequence ID" value="AAV82176.1"/>
    <property type="molecule type" value="Genomic_DNA"/>
</dbReference>
<dbReference type="RefSeq" id="WP_011234582.1">
    <property type="nucleotide sequence ID" value="NC_006512.1"/>
</dbReference>
<dbReference type="SMR" id="Q5QZ32"/>
<dbReference type="STRING" id="283942.IL1336"/>
<dbReference type="GeneID" id="41336512"/>
<dbReference type="KEGG" id="ilo:IL1336"/>
<dbReference type="eggNOG" id="COG0125">
    <property type="taxonomic scope" value="Bacteria"/>
</dbReference>
<dbReference type="HOGENOM" id="CLU_049131_0_1_6"/>
<dbReference type="OrthoDB" id="9774907at2"/>
<dbReference type="Proteomes" id="UP000001171">
    <property type="component" value="Chromosome"/>
</dbReference>
<dbReference type="GO" id="GO:0005829">
    <property type="term" value="C:cytosol"/>
    <property type="evidence" value="ECO:0007669"/>
    <property type="project" value="TreeGrafter"/>
</dbReference>
<dbReference type="GO" id="GO:0005524">
    <property type="term" value="F:ATP binding"/>
    <property type="evidence" value="ECO:0007669"/>
    <property type="project" value="UniProtKB-UniRule"/>
</dbReference>
<dbReference type="GO" id="GO:0004798">
    <property type="term" value="F:dTMP kinase activity"/>
    <property type="evidence" value="ECO:0007669"/>
    <property type="project" value="UniProtKB-UniRule"/>
</dbReference>
<dbReference type="GO" id="GO:0006233">
    <property type="term" value="P:dTDP biosynthetic process"/>
    <property type="evidence" value="ECO:0007669"/>
    <property type="project" value="InterPro"/>
</dbReference>
<dbReference type="GO" id="GO:0006235">
    <property type="term" value="P:dTTP biosynthetic process"/>
    <property type="evidence" value="ECO:0007669"/>
    <property type="project" value="UniProtKB-UniRule"/>
</dbReference>
<dbReference type="GO" id="GO:0006227">
    <property type="term" value="P:dUDP biosynthetic process"/>
    <property type="evidence" value="ECO:0007669"/>
    <property type="project" value="TreeGrafter"/>
</dbReference>
<dbReference type="CDD" id="cd01672">
    <property type="entry name" value="TMPK"/>
    <property type="match status" value="1"/>
</dbReference>
<dbReference type="FunFam" id="3.40.50.300:FF:000225">
    <property type="entry name" value="Thymidylate kinase"/>
    <property type="match status" value="1"/>
</dbReference>
<dbReference type="Gene3D" id="3.40.50.300">
    <property type="entry name" value="P-loop containing nucleotide triphosphate hydrolases"/>
    <property type="match status" value="1"/>
</dbReference>
<dbReference type="HAMAP" id="MF_00165">
    <property type="entry name" value="Thymidylate_kinase"/>
    <property type="match status" value="1"/>
</dbReference>
<dbReference type="InterPro" id="IPR027417">
    <property type="entry name" value="P-loop_NTPase"/>
</dbReference>
<dbReference type="InterPro" id="IPR039430">
    <property type="entry name" value="Thymidylate_kin-like_dom"/>
</dbReference>
<dbReference type="InterPro" id="IPR018095">
    <property type="entry name" value="Thymidylate_kin_CS"/>
</dbReference>
<dbReference type="InterPro" id="IPR018094">
    <property type="entry name" value="Thymidylate_kinase"/>
</dbReference>
<dbReference type="NCBIfam" id="TIGR00041">
    <property type="entry name" value="DTMP_kinase"/>
    <property type="match status" value="1"/>
</dbReference>
<dbReference type="PANTHER" id="PTHR10344">
    <property type="entry name" value="THYMIDYLATE KINASE"/>
    <property type="match status" value="1"/>
</dbReference>
<dbReference type="PANTHER" id="PTHR10344:SF4">
    <property type="entry name" value="UMP-CMP KINASE 2, MITOCHONDRIAL"/>
    <property type="match status" value="1"/>
</dbReference>
<dbReference type="Pfam" id="PF02223">
    <property type="entry name" value="Thymidylate_kin"/>
    <property type="match status" value="1"/>
</dbReference>
<dbReference type="SUPFAM" id="SSF52540">
    <property type="entry name" value="P-loop containing nucleoside triphosphate hydrolases"/>
    <property type="match status" value="1"/>
</dbReference>
<dbReference type="PROSITE" id="PS01331">
    <property type="entry name" value="THYMIDYLATE_KINASE"/>
    <property type="match status" value="1"/>
</dbReference>
<sequence>MSGKFIVIEGLEGAGKSSAIASVVTHLQAKGIQVETVREPGGTPLAESLRDLVKKKWEEKVSPTTELLLMYASRVQLVDNIIKPALSKNRWVIGDRHDLSSRAYQGGGRELGDELLQKIRKITLGNFTPDLTLLLDVEEKKGLERARERGELDRIEEEDLAFFQRTRQRYLNIAAKDPSIIVIDANQSMLDVHQSILRAIEEYLF</sequence>
<keyword id="KW-0067">ATP-binding</keyword>
<keyword id="KW-0418">Kinase</keyword>
<keyword id="KW-0545">Nucleotide biosynthesis</keyword>
<keyword id="KW-0547">Nucleotide-binding</keyword>
<keyword id="KW-1185">Reference proteome</keyword>
<keyword id="KW-0808">Transferase</keyword>
<name>KTHY_IDILO</name>
<accession>Q5QZ32</accession>
<feature type="chain" id="PRO_0000155285" description="Thymidylate kinase">
    <location>
        <begin position="1"/>
        <end position="205"/>
    </location>
</feature>
<feature type="binding site" evidence="1">
    <location>
        <begin position="10"/>
        <end position="17"/>
    </location>
    <ligand>
        <name>ATP</name>
        <dbReference type="ChEBI" id="CHEBI:30616"/>
    </ligand>
</feature>
<reference key="1">
    <citation type="journal article" date="2004" name="Proc. Natl. Acad. Sci. U.S.A.">
        <title>Genome sequence of the deep-sea gamma-proteobacterium Idiomarina loihiensis reveals amino acid fermentation as a source of carbon and energy.</title>
        <authorList>
            <person name="Hou S."/>
            <person name="Saw J.H."/>
            <person name="Lee K.S."/>
            <person name="Freitas T.A."/>
            <person name="Belisle C."/>
            <person name="Kawarabayasi Y."/>
            <person name="Donachie S.P."/>
            <person name="Pikina A."/>
            <person name="Galperin M.Y."/>
            <person name="Koonin E.V."/>
            <person name="Makarova K.S."/>
            <person name="Omelchenko M.V."/>
            <person name="Sorokin A."/>
            <person name="Wolf Y.I."/>
            <person name="Li Q.X."/>
            <person name="Keum Y.S."/>
            <person name="Campbell S."/>
            <person name="Denery J."/>
            <person name="Aizawa S."/>
            <person name="Shibata S."/>
            <person name="Malahoff A."/>
            <person name="Alam M."/>
        </authorList>
    </citation>
    <scope>NUCLEOTIDE SEQUENCE [LARGE SCALE GENOMIC DNA]</scope>
    <source>
        <strain>ATCC BAA-735 / DSM 15497 / L2-TR</strain>
    </source>
</reference>
<proteinExistence type="inferred from homology"/>
<protein>
    <recommendedName>
        <fullName evidence="1">Thymidylate kinase</fullName>
        <ecNumber evidence="1">2.7.4.9</ecNumber>
    </recommendedName>
    <alternativeName>
        <fullName evidence="1">dTMP kinase</fullName>
    </alternativeName>
</protein>